<sequence>MSDSPVDLKPKPKVKPKLERPKLYKVMLLNDDYTPREFVTVVLKAVFRMSEDTGRRVMMTAHRFGSAVVVVCERDIAETKAKEATDLGKEAGFPLMFTTEPEE</sequence>
<proteinExistence type="evidence at protein level"/>
<protein>
    <recommendedName>
        <fullName evidence="1">ATP-dependent Clp protease adapter protein ClpS 2</fullName>
    </recommendedName>
</protein>
<name>CLPS2_AGRFC</name>
<organism>
    <name type="scientific">Agrobacterium fabrum (strain C58 / ATCC 33970)</name>
    <name type="common">Agrobacterium tumefaciens (strain C58)</name>
    <dbReference type="NCBI Taxonomy" id="176299"/>
    <lineage>
        <taxon>Bacteria</taxon>
        <taxon>Pseudomonadati</taxon>
        <taxon>Pseudomonadota</taxon>
        <taxon>Alphaproteobacteria</taxon>
        <taxon>Hyphomicrobiales</taxon>
        <taxon>Rhizobiaceae</taxon>
        <taxon>Rhizobium/Agrobacterium group</taxon>
        <taxon>Agrobacterium</taxon>
        <taxon>Agrobacterium tumefaciens complex</taxon>
    </lineage>
</organism>
<reference key="1">
    <citation type="journal article" date="2001" name="Science">
        <title>The genome of the natural genetic engineer Agrobacterium tumefaciens C58.</title>
        <authorList>
            <person name="Wood D.W."/>
            <person name="Setubal J.C."/>
            <person name="Kaul R."/>
            <person name="Monks D.E."/>
            <person name="Kitajima J.P."/>
            <person name="Okura V.K."/>
            <person name="Zhou Y."/>
            <person name="Chen L."/>
            <person name="Wood G.E."/>
            <person name="Almeida N.F. Jr."/>
            <person name="Woo L."/>
            <person name="Chen Y."/>
            <person name="Paulsen I.T."/>
            <person name="Eisen J.A."/>
            <person name="Karp P.D."/>
            <person name="Bovee D. Sr."/>
            <person name="Chapman P."/>
            <person name="Clendenning J."/>
            <person name="Deatherage G."/>
            <person name="Gillet W."/>
            <person name="Grant C."/>
            <person name="Kutyavin T."/>
            <person name="Levy R."/>
            <person name="Li M.-J."/>
            <person name="McClelland E."/>
            <person name="Palmieri A."/>
            <person name="Raymond C."/>
            <person name="Rouse G."/>
            <person name="Saenphimmachak C."/>
            <person name="Wu Z."/>
            <person name="Romero P."/>
            <person name="Gordon D."/>
            <person name="Zhang S."/>
            <person name="Yoo H."/>
            <person name="Tao Y."/>
            <person name="Biddle P."/>
            <person name="Jung M."/>
            <person name="Krespan W."/>
            <person name="Perry M."/>
            <person name="Gordon-Kamm B."/>
            <person name="Liao L."/>
            <person name="Kim S."/>
            <person name="Hendrick C."/>
            <person name="Zhao Z.-Y."/>
            <person name="Dolan M."/>
            <person name="Chumley F."/>
            <person name="Tingey S.V."/>
            <person name="Tomb J.-F."/>
            <person name="Gordon M.P."/>
            <person name="Olson M.V."/>
            <person name="Nester E.W."/>
        </authorList>
    </citation>
    <scope>NUCLEOTIDE SEQUENCE [LARGE SCALE GENOMIC DNA]</scope>
    <source>
        <strain>C58 / ATCC 33970</strain>
    </source>
</reference>
<reference key="2">
    <citation type="journal article" date="2001" name="Science">
        <title>Genome sequence of the plant pathogen and biotechnology agent Agrobacterium tumefaciens C58.</title>
        <authorList>
            <person name="Goodner B."/>
            <person name="Hinkle G."/>
            <person name="Gattung S."/>
            <person name="Miller N."/>
            <person name="Blanchard M."/>
            <person name="Qurollo B."/>
            <person name="Goldman B.S."/>
            <person name="Cao Y."/>
            <person name="Askenazi M."/>
            <person name="Halling C."/>
            <person name="Mullin L."/>
            <person name="Houmiel K."/>
            <person name="Gordon J."/>
            <person name="Vaudin M."/>
            <person name="Iartchouk O."/>
            <person name="Epp A."/>
            <person name="Liu F."/>
            <person name="Wollam C."/>
            <person name="Allinger M."/>
            <person name="Doughty D."/>
            <person name="Scott C."/>
            <person name="Lappas C."/>
            <person name="Markelz B."/>
            <person name="Flanagan C."/>
            <person name="Crowell C."/>
            <person name="Gurson J."/>
            <person name="Lomo C."/>
            <person name="Sear C."/>
            <person name="Strub G."/>
            <person name="Cielo C."/>
            <person name="Slater S."/>
        </authorList>
    </citation>
    <scope>NUCLEOTIDE SEQUENCE [LARGE SCALE GENOMIC DNA]</scope>
    <source>
        <strain>C58 / ATCC 33970</strain>
    </source>
</reference>
<gene>
    <name evidence="1" type="primary">clpS2</name>
    <name type="ordered locus">Atu2232</name>
    <name type="ORF">AGR_C_4060</name>
</gene>
<accession>Q8UD95</accession>
<evidence type="ECO:0000255" key="1">
    <source>
        <dbReference type="HAMAP-Rule" id="MF_00302"/>
    </source>
</evidence>
<evidence type="ECO:0007829" key="2">
    <source>
        <dbReference type="PDB" id="4YJM"/>
    </source>
</evidence>
<keyword id="KW-0002">3D-structure</keyword>
<keyword id="KW-1185">Reference proteome</keyword>
<feature type="chain" id="PRO_0000215681" description="ATP-dependent Clp protease adapter protein ClpS 2">
    <location>
        <begin position="1"/>
        <end position="103"/>
    </location>
</feature>
<feature type="strand" evidence="2">
    <location>
        <begin position="23"/>
        <end position="29"/>
    </location>
</feature>
<feature type="strand" evidence="2">
    <location>
        <begin position="32"/>
        <end position="34"/>
    </location>
</feature>
<feature type="helix" evidence="2">
    <location>
        <begin position="36"/>
        <end position="47"/>
    </location>
</feature>
<feature type="helix" evidence="2">
    <location>
        <begin position="51"/>
        <end position="64"/>
    </location>
</feature>
<feature type="strand" evidence="2">
    <location>
        <begin position="65"/>
        <end position="73"/>
    </location>
</feature>
<feature type="helix" evidence="2">
    <location>
        <begin position="74"/>
        <end position="90"/>
    </location>
</feature>
<feature type="strand" evidence="2">
    <location>
        <begin position="97"/>
        <end position="101"/>
    </location>
</feature>
<comment type="function">
    <text evidence="1">Involved in the modulation of the specificity of the ClpAP-mediated ATP-dependent protein degradation.</text>
</comment>
<comment type="subunit">
    <text evidence="1">Binds to the N-terminal domain of the chaperone ClpA.</text>
</comment>
<comment type="similarity">
    <text evidence="1">Belongs to the ClpS family.</text>
</comment>
<dbReference type="EMBL" id="AE007869">
    <property type="protein sequence ID" value="AAK87974.1"/>
    <property type="molecule type" value="Genomic_DNA"/>
</dbReference>
<dbReference type="PIR" id="AG2850">
    <property type="entry name" value="AG2850"/>
</dbReference>
<dbReference type="PIR" id="E97627">
    <property type="entry name" value="E97627"/>
</dbReference>
<dbReference type="RefSeq" id="NP_355189.1">
    <property type="nucleotide sequence ID" value="NC_003062.2"/>
</dbReference>
<dbReference type="RefSeq" id="WP_010972159.1">
    <property type="nucleotide sequence ID" value="NC_003062.2"/>
</dbReference>
<dbReference type="PDB" id="4YJM">
    <property type="method" value="X-ray"/>
    <property type="resolution" value="1.95 A"/>
    <property type="chains" value="A/B/C/D=1-103"/>
</dbReference>
<dbReference type="PDB" id="4YJX">
    <property type="method" value="X-ray"/>
    <property type="resolution" value="2.55 A"/>
    <property type="chains" value="A/B/C/D=1-103"/>
</dbReference>
<dbReference type="PDB" id="4YKA">
    <property type="method" value="X-ray"/>
    <property type="resolution" value="2.80 A"/>
    <property type="chains" value="A/B/C/D=1-103"/>
</dbReference>
<dbReference type="PDBsum" id="4YJM"/>
<dbReference type="PDBsum" id="4YJX"/>
<dbReference type="PDBsum" id="4YKA"/>
<dbReference type="SMR" id="Q8UD95"/>
<dbReference type="STRING" id="176299.Atu2232"/>
<dbReference type="EnsemblBacteria" id="AAK87974">
    <property type="protein sequence ID" value="AAK87974"/>
    <property type="gene ID" value="Atu2232"/>
</dbReference>
<dbReference type="GeneID" id="1134270"/>
<dbReference type="KEGG" id="atu:Atu2232"/>
<dbReference type="PATRIC" id="fig|176299.10.peg.2241"/>
<dbReference type="eggNOG" id="COG2127">
    <property type="taxonomic scope" value="Bacteria"/>
</dbReference>
<dbReference type="HOGENOM" id="CLU_134358_3_0_5"/>
<dbReference type="OrthoDB" id="9796121at2"/>
<dbReference type="PhylomeDB" id="Q8UD95"/>
<dbReference type="BioCyc" id="AGRO:ATU2232-MONOMER"/>
<dbReference type="EvolutionaryTrace" id="Q8UD95"/>
<dbReference type="Proteomes" id="UP000000813">
    <property type="component" value="Chromosome circular"/>
</dbReference>
<dbReference type="GO" id="GO:0030163">
    <property type="term" value="P:protein catabolic process"/>
    <property type="evidence" value="ECO:0007669"/>
    <property type="project" value="InterPro"/>
</dbReference>
<dbReference type="GO" id="GO:0006508">
    <property type="term" value="P:proteolysis"/>
    <property type="evidence" value="ECO:0007669"/>
    <property type="project" value="UniProtKB-UniRule"/>
</dbReference>
<dbReference type="Gene3D" id="3.30.1390.10">
    <property type="match status" value="1"/>
</dbReference>
<dbReference type="HAMAP" id="MF_00302">
    <property type="entry name" value="ClpS"/>
    <property type="match status" value="1"/>
</dbReference>
<dbReference type="InterPro" id="IPR022935">
    <property type="entry name" value="ClpS"/>
</dbReference>
<dbReference type="InterPro" id="IPR003769">
    <property type="entry name" value="ClpS_core"/>
</dbReference>
<dbReference type="InterPro" id="IPR014719">
    <property type="entry name" value="Ribosomal_bL12_C/ClpS-like"/>
</dbReference>
<dbReference type="NCBIfam" id="NF009561">
    <property type="entry name" value="PRK13019.1-1"/>
    <property type="match status" value="1"/>
</dbReference>
<dbReference type="NCBIfam" id="NF009564">
    <property type="entry name" value="PRK13019.1-4"/>
    <property type="match status" value="1"/>
</dbReference>
<dbReference type="PANTHER" id="PTHR33473:SF19">
    <property type="entry name" value="ATP-DEPENDENT CLP PROTEASE ADAPTER PROTEIN CLPS"/>
    <property type="match status" value="1"/>
</dbReference>
<dbReference type="PANTHER" id="PTHR33473">
    <property type="entry name" value="ATP-DEPENDENT CLP PROTEASE ADAPTER PROTEIN CLPS1, CHLOROPLASTIC"/>
    <property type="match status" value="1"/>
</dbReference>
<dbReference type="Pfam" id="PF02617">
    <property type="entry name" value="ClpS"/>
    <property type="match status" value="1"/>
</dbReference>
<dbReference type="SUPFAM" id="SSF54736">
    <property type="entry name" value="ClpS-like"/>
    <property type="match status" value="1"/>
</dbReference>